<evidence type="ECO:0000255" key="1">
    <source>
        <dbReference type="HAMAP-Rule" id="MF_01374"/>
    </source>
</evidence>
<proteinExistence type="inferred from homology"/>
<protein>
    <recommendedName>
        <fullName evidence="1">Hydroxyacylglutathione hydrolase</fullName>
        <ecNumber evidence="1">3.1.2.6</ecNumber>
    </recommendedName>
    <alternativeName>
        <fullName evidence="1">Glyoxalase II</fullName>
        <shortName evidence="1">Glx II</shortName>
    </alternativeName>
</protein>
<keyword id="KW-0378">Hydrolase</keyword>
<keyword id="KW-0479">Metal-binding</keyword>
<keyword id="KW-1185">Reference proteome</keyword>
<keyword id="KW-0862">Zinc</keyword>
<comment type="function">
    <text evidence="1">Thiolesterase that catalyzes the hydrolysis of S-D-lactoyl-glutathione to form glutathione and D-lactic acid.</text>
</comment>
<comment type="catalytic activity">
    <reaction evidence="1">
        <text>an S-(2-hydroxyacyl)glutathione + H2O = a 2-hydroxy carboxylate + glutathione + H(+)</text>
        <dbReference type="Rhea" id="RHEA:21864"/>
        <dbReference type="ChEBI" id="CHEBI:15377"/>
        <dbReference type="ChEBI" id="CHEBI:15378"/>
        <dbReference type="ChEBI" id="CHEBI:57925"/>
        <dbReference type="ChEBI" id="CHEBI:58896"/>
        <dbReference type="ChEBI" id="CHEBI:71261"/>
        <dbReference type="EC" id="3.1.2.6"/>
    </reaction>
</comment>
<comment type="cofactor">
    <cofactor evidence="1">
        <name>Zn(2+)</name>
        <dbReference type="ChEBI" id="CHEBI:29105"/>
    </cofactor>
    <text evidence="1">Binds 2 Zn(2+) ions per subunit.</text>
</comment>
<comment type="pathway">
    <text evidence="1">Secondary metabolite metabolism; methylglyoxal degradation; (R)-lactate from methylglyoxal: step 2/2.</text>
</comment>
<comment type="subunit">
    <text evidence="1">Monomer.</text>
</comment>
<comment type="similarity">
    <text evidence="1">Belongs to the metallo-beta-lactamase superfamily. Glyoxalase II family.</text>
</comment>
<feature type="chain" id="PRO_0000309698" description="Hydroxyacylglutathione hydrolase">
    <location>
        <begin position="1"/>
        <end position="256"/>
    </location>
</feature>
<feature type="binding site" evidence="1">
    <location>
        <position position="57"/>
    </location>
    <ligand>
        <name>Zn(2+)</name>
        <dbReference type="ChEBI" id="CHEBI:29105"/>
        <label>1</label>
    </ligand>
</feature>
<feature type="binding site" evidence="1">
    <location>
        <position position="59"/>
    </location>
    <ligand>
        <name>Zn(2+)</name>
        <dbReference type="ChEBI" id="CHEBI:29105"/>
        <label>1</label>
    </ligand>
</feature>
<feature type="binding site" evidence="1">
    <location>
        <position position="61"/>
    </location>
    <ligand>
        <name>Zn(2+)</name>
        <dbReference type="ChEBI" id="CHEBI:29105"/>
        <label>2</label>
    </ligand>
</feature>
<feature type="binding site" evidence="1">
    <location>
        <position position="62"/>
    </location>
    <ligand>
        <name>Zn(2+)</name>
        <dbReference type="ChEBI" id="CHEBI:29105"/>
        <label>2</label>
    </ligand>
</feature>
<feature type="binding site" evidence="1">
    <location>
        <position position="115"/>
    </location>
    <ligand>
        <name>Zn(2+)</name>
        <dbReference type="ChEBI" id="CHEBI:29105"/>
        <label>1</label>
    </ligand>
</feature>
<feature type="binding site" evidence="1">
    <location>
        <position position="134"/>
    </location>
    <ligand>
        <name>Zn(2+)</name>
        <dbReference type="ChEBI" id="CHEBI:29105"/>
        <label>1</label>
    </ligand>
</feature>
<feature type="binding site" evidence="1">
    <location>
        <position position="134"/>
    </location>
    <ligand>
        <name>Zn(2+)</name>
        <dbReference type="ChEBI" id="CHEBI:29105"/>
        <label>2</label>
    </ligand>
</feature>
<feature type="binding site" evidence="1">
    <location>
        <position position="172"/>
    </location>
    <ligand>
        <name>Zn(2+)</name>
        <dbReference type="ChEBI" id="CHEBI:29105"/>
        <label>2</label>
    </ligand>
</feature>
<organism>
    <name type="scientific">Rhodospirillum rubrum (strain ATCC 11170 / ATH 1.1.1 / DSM 467 / LMG 4362 / NCIMB 8255 / S1)</name>
    <dbReference type="NCBI Taxonomy" id="269796"/>
    <lineage>
        <taxon>Bacteria</taxon>
        <taxon>Pseudomonadati</taxon>
        <taxon>Pseudomonadota</taxon>
        <taxon>Alphaproteobacteria</taxon>
        <taxon>Rhodospirillales</taxon>
        <taxon>Rhodospirillaceae</taxon>
        <taxon>Rhodospirillum</taxon>
    </lineage>
</organism>
<sequence>MSTLDIHQIAVLSDNYIYLVRCRATGACAVIDPSLAEPVLAAAESLGWTITHILNTHHHYDHTGGNEEIKAATGCEIIGFAGDAHRLPGIDRTVVEGDRVAIGQAEARVIETPGHTLGHIAYWFAESSALFCGDTLFSAGCGRLFEGSAGQMWDSLRKLRALPAQTLVFCGHEYTQPNITFALTIDPRNEALRARALEVDALRAAGRPTVPAFLGDEARSNPFLRADSADFQEAFGMTGADPVEVFARTRLKKDHF</sequence>
<gene>
    <name evidence="1" type="primary">gloB</name>
    <name type="ordered locus">Rru_A3270</name>
</gene>
<dbReference type="EC" id="3.1.2.6" evidence="1"/>
<dbReference type="EMBL" id="CP000230">
    <property type="protein sequence ID" value="ABC24065.1"/>
    <property type="molecule type" value="Genomic_DNA"/>
</dbReference>
<dbReference type="RefSeq" id="WP_011391018.1">
    <property type="nucleotide sequence ID" value="NC_007643.1"/>
</dbReference>
<dbReference type="RefSeq" id="YP_428352.1">
    <property type="nucleotide sequence ID" value="NC_007643.1"/>
</dbReference>
<dbReference type="SMR" id="Q2RP80"/>
<dbReference type="STRING" id="269796.Rru_A3270"/>
<dbReference type="EnsemblBacteria" id="ABC24065">
    <property type="protein sequence ID" value="ABC24065"/>
    <property type="gene ID" value="Rru_A3270"/>
</dbReference>
<dbReference type="KEGG" id="rru:Rru_A3270"/>
<dbReference type="PATRIC" id="fig|269796.9.peg.3387"/>
<dbReference type="eggNOG" id="COG0491">
    <property type="taxonomic scope" value="Bacteria"/>
</dbReference>
<dbReference type="HOGENOM" id="CLU_030571_4_1_5"/>
<dbReference type="PhylomeDB" id="Q2RP80"/>
<dbReference type="UniPathway" id="UPA00619">
    <property type="reaction ID" value="UER00676"/>
</dbReference>
<dbReference type="Proteomes" id="UP000001929">
    <property type="component" value="Chromosome"/>
</dbReference>
<dbReference type="GO" id="GO:0004416">
    <property type="term" value="F:hydroxyacylglutathione hydrolase activity"/>
    <property type="evidence" value="ECO:0007669"/>
    <property type="project" value="UniProtKB-UniRule"/>
</dbReference>
<dbReference type="GO" id="GO:0046872">
    <property type="term" value="F:metal ion binding"/>
    <property type="evidence" value="ECO:0007669"/>
    <property type="project" value="UniProtKB-KW"/>
</dbReference>
<dbReference type="GO" id="GO:0019243">
    <property type="term" value="P:methylglyoxal catabolic process to D-lactate via S-lactoyl-glutathione"/>
    <property type="evidence" value="ECO:0007669"/>
    <property type="project" value="InterPro"/>
</dbReference>
<dbReference type="CDD" id="cd07723">
    <property type="entry name" value="hydroxyacylglutathione_hydrolase_MBL-fold"/>
    <property type="match status" value="1"/>
</dbReference>
<dbReference type="Gene3D" id="3.60.15.10">
    <property type="entry name" value="Ribonuclease Z/Hydroxyacylglutathione hydrolase-like"/>
    <property type="match status" value="1"/>
</dbReference>
<dbReference type="HAMAP" id="MF_01374">
    <property type="entry name" value="Glyoxalase_2"/>
    <property type="match status" value="1"/>
</dbReference>
<dbReference type="InterPro" id="IPR035680">
    <property type="entry name" value="Clx_II_MBL"/>
</dbReference>
<dbReference type="InterPro" id="IPR050110">
    <property type="entry name" value="Glyoxalase_II_hydrolase"/>
</dbReference>
<dbReference type="InterPro" id="IPR032282">
    <property type="entry name" value="HAGH_C"/>
</dbReference>
<dbReference type="InterPro" id="IPR017782">
    <property type="entry name" value="Hydroxyacylglutathione_Hdrlase"/>
</dbReference>
<dbReference type="InterPro" id="IPR001279">
    <property type="entry name" value="Metallo-B-lactamas"/>
</dbReference>
<dbReference type="InterPro" id="IPR036866">
    <property type="entry name" value="RibonucZ/Hydroxyglut_hydro"/>
</dbReference>
<dbReference type="NCBIfam" id="TIGR03413">
    <property type="entry name" value="GSH_gloB"/>
    <property type="match status" value="1"/>
</dbReference>
<dbReference type="PANTHER" id="PTHR43705">
    <property type="entry name" value="HYDROXYACYLGLUTATHIONE HYDROLASE"/>
    <property type="match status" value="1"/>
</dbReference>
<dbReference type="PANTHER" id="PTHR43705:SF1">
    <property type="entry name" value="HYDROXYACYLGLUTATHIONE HYDROLASE GLOB"/>
    <property type="match status" value="1"/>
</dbReference>
<dbReference type="Pfam" id="PF16123">
    <property type="entry name" value="HAGH_C"/>
    <property type="match status" value="1"/>
</dbReference>
<dbReference type="Pfam" id="PF00753">
    <property type="entry name" value="Lactamase_B"/>
    <property type="match status" value="1"/>
</dbReference>
<dbReference type="PIRSF" id="PIRSF005457">
    <property type="entry name" value="Glx"/>
    <property type="match status" value="1"/>
</dbReference>
<dbReference type="SMART" id="SM00849">
    <property type="entry name" value="Lactamase_B"/>
    <property type="match status" value="1"/>
</dbReference>
<dbReference type="SUPFAM" id="SSF56281">
    <property type="entry name" value="Metallo-hydrolase/oxidoreductase"/>
    <property type="match status" value="1"/>
</dbReference>
<accession>Q2RP80</accession>
<reference key="1">
    <citation type="journal article" date="2011" name="Stand. Genomic Sci.">
        <title>Complete genome sequence of Rhodospirillum rubrum type strain (S1).</title>
        <authorList>
            <person name="Munk A.C."/>
            <person name="Copeland A."/>
            <person name="Lucas S."/>
            <person name="Lapidus A."/>
            <person name="Del Rio T.G."/>
            <person name="Barry K."/>
            <person name="Detter J.C."/>
            <person name="Hammon N."/>
            <person name="Israni S."/>
            <person name="Pitluck S."/>
            <person name="Brettin T."/>
            <person name="Bruce D."/>
            <person name="Han C."/>
            <person name="Tapia R."/>
            <person name="Gilna P."/>
            <person name="Schmutz J."/>
            <person name="Larimer F."/>
            <person name="Land M."/>
            <person name="Kyrpides N.C."/>
            <person name="Mavromatis K."/>
            <person name="Richardson P."/>
            <person name="Rohde M."/>
            <person name="Goeker M."/>
            <person name="Klenk H.P."/>
            <person name="Zhang Y."/>
            <person name="Roberts G.P."/>
            <person name="Reslewic S."/>
            <person name="Schwartz D.C."/>
        </authorList>
    </citation>
    <scope>NUCLEOTIDE SEQUENCE [LARGE SCALE GENOMIC DNA]</scope>
    <source>
        <strain>ATCC 11170 / ATH 1.1.1 / DSM 467 / LMG 4362 / NCIMB 8255 / S1</strain>
    </source>
</reference>
<name>GLO2_RHORT</name>